<reference key="1">
    <citation type="journal article" date="2004" name="Nature">
        <title>Genome evolution in yeasts.</title>
        <authorList>
            <person name="Dujon B."/>
            <person name="Sherman D."/>
            <person name="Fischer G."/>
            <person name="Durrens P."/>
            <person name="Casaregola S."/>
            <person name="Lafontaine I."/>
            <person name="de Montigny J."/>
            <person name="Marck C."/>
            <person name="Neuveglise C."/>
            <person name="Talla E."/>
            <person name="Goffard N."/>
            <person name="Frangeul L."/>
            <person name="Aigle M."/>
            <person name="Anthouard V."/>
            <person name="Babour A."/>
            <person name="Barbe V."/>
            <person name="Barnay S."/>
            <person name="Blanchin S."/>
            <person name="Beckerich J.-M."/>
            <person name="Beyne E."/>
            <person name="Bleykasten C."/>
            <person name="Boisrame A."/>
            <person name="Boyer J."/>
            <person name="Cattolico L."/>
            <person name="Confanioleri F."/>
            <person name="de Daruvar A."/>
            <person name="Despons L."/>
            <person name="Fabre E."/>
            <person name="Fairhead C."/>
            <person name="Ferry-Dumazet H."/>
            <person name="Groppi A."/>
            <person name="Hantraye F."/>
            <person name="Hennequin C."/>
            <person name="Jauniaux N."/>
            <person name="Joyet P."/>
            <person name="Kachouri R."/>
            <person name="Kerrest A."/>
            <person name="Koszul R."/>
            <person name="Lemaire M."/>
            <person name="Lesur I."/>
            <person name="Ma L."/>
            <person name="Muller H."/>
            <person name="Nicaud J.-M."/>
            <person name="Nikolski M."/>
            <person name="Oztas S."/>
            <person name="Ozier-Kalogeropoulos O."/>
            <person name="Pellenz S."/>
            <person name="Potier S."/>
            <person name="Richard G.-F."/>
            <person name="Straub M.-L."/>
            <person name="Suleau A."/>
            <person name="Swennen D."/>
            <person name="Tekaia F."/>
            <person name="Wesolowski-Louvel M."/>
            <person name="Westhof E."/>
            <person name="Wirth B."/>
            <person name="Zeniou-Meyer M."/>
            <person name="Zivanovic Y."/>
            <person name="Bolotin-Fukuhara M."/>
            <person name="Thierry A."/>
            <person name="Bouchier C."/>
            <person name="Caudron B."/>
            <person name="Scarpelli C."/>
            <person name="Gaillardin C."/>
            <person name="Weissenbach J."/>
            <person name="Wincker P."/>
            <person name="Souciet J.-L."/>
        </authorList>
    </citation>
    <scope>NUCLEOTIDE SEQUENCE [LARGE SCALE GENOMIC DNA]</scope>
    <source>
        <strain>ATCC 8585 / CBS 2359 / DSM 70799 / NBRC 1267 / NRRL Y-1140 / WM37</strain>
    </source>
</reference>
<protein>
    <recommendedName>
        <fullName>Chromosome segregation in meiosis protein 3</fullName>
    </recommendedName>
</protein>
<comment type="function">
    <text evidence="1">Forms a fork protection complex (FPC) with TOF1 and which is required for chromosome segregation during meiosis and DNA damage repair. FPC coordinates leading and lagging strand synthesis and moves with the replication fork. FPC stabilizes replication forks in a configuration that is recognized by replication checkpoint sensors (By similarity).</text>
</comment>
<comment type="subunit">
    <text evidence="1">Component of the fork protection complex (FPC) consisting of TOF1 and CSM3.</text>
</comment>
<comment type="subcellular location">
    <subcellularLocation>
        <location evidence="1">Nucleus</location>
    </subcellularLocation>
</comment>
<comment type="similarity">
    <text evidence="3">Belongs to the CSM3 family.</text>
</comment>
<evidence type="ECO:0000250" key="1"/>
<evidence type="ECO:0000256" key="2">
    <source>
        <dbReference type="SAM" id="MobiDB-lite"/>
    </source>
</evidence>
<evidence type="ECO:0000305" key="3"/>
<accession>Q6CIH2</accession>
<organism>
    <name type="scientific">Kluyveromyces lactis (strain ATCC 8585 / CBS 2359 / DSM 70799 / NBRC 1267 / NRRL Y-1140 / WM37)</name>
    <name type="common">Yeast</name>
    <name type="synonym">Candida sphaerica</name>
    <dbReference type="NCBI Taxonomy" id="284590"/>
    <lineage>
        <taxon>Eukaryota</taxon>
        <taxon>Fungi</taxon>
        <taxon>Dikarya</taxon>
        <taxon>Ascomycota</taxon>
        <taxon>Saccharomycotina</taxon>
        <taxon>Saccharomycetes</taxon>
        <taxon>Saccharomycetales</taxon>
        <taxon>Saccharomycetaceae</taxon>
        <taxon>Kluyveromyces</taxon>
    </lineage>
</organism>
<dbReference type="EMBL" id="CR382126">
    <property type="protein sequence ID" value="CAG98975.1"/>
    <property type="molecule type" value="Genomic_DNA"/>
</dbReference>
<dbReference type="RefSeq" id="XP_456267.1">
    <property type="nucleotide sequence ID" value="XM_456267.1"/>
</dbReference>
<dbReference type="SMR" id="Q6CIH2"/>
<dbReference type="FunCoup" id="Q6CIH2">
    <property type="interactions" value="273"/>
</dbReference>
<dbReference type="STRING" id="284590.Q6CIH2"/>
<dbReference type="PaxDb" id="284590-Q6CIH2"/>
<dbReference type="KEGG" id="kla:KLLA0_F26675g"/>
<dbReference type="eggNOG" id="KOG3004">
    <property type="taxonomic scope" value="Eukaryota"/>
</dbReference>
<dbReference type="HOGENOM" id="CLU_068300_0_0_1"/>
<dbReference type="InParanoid" id="Q6CIH2"/>
<dbReference type="OMA" id="ELREYRM"/>
<dbReference type="Proteomes" id="UP000000598">
    <property type="component" value="Chromosome F"/>
</dbReference>
<dbReference type="GO" id="GO:0031298">
    <property type="term" value="C:replication fork protection complex"/>
    <property type="evidence" value="ECO:0007669"/>
    <property type="project" value="TreeGrafter"/>
</dbReference>
<dbReference type="GO" id="GO:0003677">
    <property type="term" value="F:DNA binding"/>
    <property type="evidence" value="ECO:0007669"/>
    <property type="project" value="TreeGrafter"/>
</dbReference>
<dbReference type="GO" id="GO:0006281">
    <property type="term" value="P:DNA repair"/>
    <property type="evidence" value="ECO:0007669"/>
    <property type="project" value="UniProtKB-KW"/>
</dbReference>
<dbReference type="GO" id="GO:0000076">
    <property type="term" value="P:DNA replication checkpoint signaling"/>
    <property type="evidence" value="ECO:0007669"/>
    <property type="project" value="InterPro"/>
</dbReference>
<dbReference type="GO" id="GO:0051321">
    <property type="term" value="P:meiotic cell cycle"/>
    <property type="evidence" value="ECO:0007669"/>
    <property type="project" value="UniProtKB-KW"/>
</dbReference>
<dbReference type="GO" id="GO:0043111">
    <property type="term" value="P:replication fork arrest"/>
    <property type="evidence" value="ECO:0007669"/>
    <property type="project" value="TreeGrafter"/>
</dbReference>
<dbReference type="GO" id="GO:0031297">
    <property type="term" value="P:replication fork processing"/>
    <property type="evidence" value="ECO:0007669"/>
    <property type="project" value="InterPro"/>
</dbReference>
<dbReference type="InterPro" id="IPR012923">
    <property type="entry name" value="Csm3"/>
</dbReference>
<dbReference type="InterPro" id="IPR040038">
    <property type="entry name" value="TIPIN/Csm3/Swi3"/>
</dbReference>
<dbReference type="PANTHER" id="PTHR13220">
    <property type="entry name" value="TIMELESS INTERACTING-RELATED"/>
    <property type="match status" value="1"/>
</dbReference>
<dbReference type="PANTHER" id="PTHR13220:SF11">
    <property type="entry name" value="TIMELESS-INTERACTING PROTEIN"/>
    <property type="match status" value="1"/>
</dbReference>
<dbReference type="Pfam" id="PF07962">
    <property type="entry name" value="Swi3"/>
    <property type="match status" value="1"/>
</dbReference>
<proteinExistence type="inferred from homology"/>
<feature type="chain" id="PRO_0000301718" description="Chromosome segregation in meiosis protein 3">
    <location>
        <begin position="1"/>
        <end position="299"/>
    </location>
</feature>
<feature type="region of interest" description="Disordered" evidence="2">
    <location>
        <begin position="34"/>
        <end position="54"/>
    </location>
</feature>
<feature type="region of interest" description="Disordered" evidence="2">
    <location>
        <begin position="205"/>
        <end position="246"/>
    </location>
</feature>
<feature type="compositionally biased region" description="Polar residues" evidence="2">
    <location>
        <begin position="39"/>
        <end position="54"/>
    </location>
</feature>
<feature type="compositionally biased region" description="Acidic residues" evidence="2">
    <location>
        <begin position="215"/>
        <end position="228"/>
    </location>
</feature>
<name>CSM3_KLULA</name>
<keyword id="KW-0131">Cell cycle</keyword>
<keyword id="KW-0227">DNA damage</keyword>
<keyword id="KW-0234">DNA repair</keyword>
<keyword id="KW-0236">DNA replication inhibitor</keyword>
<keyword id="KW-0469">Meiosis</keyword>
<keyword id="KW-0539">Nucleus</keyword>
<keyword id="KW-1185">Reference proteome</keyword>
<gene>
    <name type="primary">CSM3</name>
    <name type="ordered locus">KLLA0F26675g</name>
</gene>
<sequence length="299" mass="33732">MSIDDDMNDLSAFQGNATEDGNMRLDFELDPTVNGLDPSMTSTTDGQDPTLISTNTRKPRVKLTAEKLLSTKGLPYVMEHAPKSCRISKHKTAYDNLTNFLQFYQLWAHNLYPKAKFKDFTSLCESLGKTDKELREYRMNLVRKDMGILLGDDIPNVPDMQMHDTGVLPAHQGRNSLFVTDESTSATDRGNAQYGYEATKIISLDKDKNQNNDGNYDDDDDDDDDDDVLYSSHHQRHTNEMLSTTDTNIRQHTQNGYALPNAEELDELSKITTVASTTNNGNDIASDEEMAMMRDMDTF</sequence>